<comment type="subunit">
    <text evidence="1">Homooligomer (via coiled coil domain) (By similarity). Interacts with NF2; the interaction is direct (By similarity). Interacts with ANK3 (By similarity).</text>
</comment>
<comment type="interaction">
    <interactant intactId="EBI-1397475">
        <id>P0DPB4</id>
    </interactant>
    <interactant intactId="EBI-1014472">
        <id>P35240</id>
        <label>NF2</label>
    </interactant>
    <organismsDiffer>true</organismsDiffer>
    <experiments>2</experiments>
</comment>
<comment type="alternative products">
    <event type="alternative splicing"/>
    <isoform>
        <id>P0DPB4-1</id>
        <id>Q3TI53-5</id>
        <name>Schip1-1</name>
        <name evidence="8">Schip-1a</name>
        <sequence type="displayed"/>
    </isoform>
    <isoform>
        <id>P0DPB4-2</id>
        <id>Q3TI53-1</id>
        <name>Schip1-2</name>
        <sequence type="described" ref="VSP_046119"/>
    </isoform>
    <isoform>
        <id>P0DPB4-3</id>
        <id>Q3TI53-3</id>
        <name>Schip1-3</name>
        <sequence type="described" ref="VSP_025831 VSP_025834"/>
    </isoform>
    <isoform>
        <id>P0DPB4-4</id>
        <id>Q3TI53-6</id>
        <name>Schip1-4</name>
        <name evidence="8">Schip-1b</name>
        <sequence type="described" ref="VSP_046121"/>
    </isoform>
    <isoform>
        <id>A0A088MLT8-1</id>
        <name>Iqcj-schip1-1</name>
        <name>IQCJ-SCHIP-1</name>
        <sequence type="external"/>
    </isoform>
    <isoform>
        <id>A0A088MLT8-2</id>
        <name>Iqcj-schip1-2</name>
        <sequence type="external"/>
    </isoform>
</comment>
<comment type="disruption phenotype">
    <text evidence="4 5">Mice lacking all isoforms encoded by both Schip1 and Iqcj-Schip1 are fertile and survive as long as wild-type mice. However, they exhibit mild growth delay associated with ataxia and reduced pain sensitivity. They display decreased thickness of the piriform cortex and partial agenesis of the anterior comissure which could be due to impaired axon elongation and guidance. The morphology of nodes of Ranvier is affected but nerves do not exhibit significant electrophysiological characteristic differences. A reduction in the number of axonal projections in the peripheral nerve system is also observed.</text>
</comment>
<comment type="similarity">
    <text evidence="9">Belongs to the SCHIP1 family.</text>
</comment>
<comment type="sequence caution" evidence="9">
    <conflict type="frameshift">
        <sequence resource="EMBL-CDS" id="AAH94348"/>
    </conflict>
</comment>
<comment type="sequence caution" evidence="9">
    <conflict type="miscellaneous discrepancy">
        <sequence resource="EMBL-CDS" id="AAH94348"/>
    </conflict>
    <text>Aberrant splicing.</text>
</comment>
<comment type="sequence caution" evidence="9">
    <conflict type="erroneous initiation">
        <sequence resource="EMBL-CDS" id="BAB32387"/>
    </conflict>
    <text>Extended N-terminus.</text>
</comment>
<comment type="sequence caution" evidence="9">
    <conflict type="miscellaneous discrepancy">
        <sequence resource="EMBL-CDS" id="BAB32387"/>
    </conflict>
    <text>Probable cloning artifact.</text>
</comment>
<name>SCHI1_MOUSE</name>
<proteinExistence type="evidence at protein level"/>
<keyword id="KW-0025">Alternative splicing</keyword>
<keyword id="KW-0175">Coiled coil</keyword>
<keyword id="KW-1185">Reference proteome</keyword>
<gene>
    <name evidence="10" type="primary">Schip1</name>
</gene>
<accession>P0DPB4</accession>
<accession>A8IJC6</accession>
<accession>A8IJD0</accession>
<accession>A8IJD3</accession>
<accession>F6YL02</accession>
<accession>F8WI70</accession>
<accession>Q3TI53</accession>
<accession>Q52KH1</accession>
<accession>Q6P9Y8</accession>
<accession>Q9CX07</accession>
<accession>Q9JLR0</accession>
<protein>
    <recommendedName>
        <fullName evidence="8">Schwannomin-interacting protein 1</fullName>
        <shortName evidence="8">SCHIP-1</shortName>
    </recommendedName>
</protein>
<dbReference type="EMBL" id="EU163407">
    <property type="protein sequence ID" value="ABW06760.1"/>
    <property type="molecule type" value="mRNA"/>
</dbReference>
<dbReference type="EMBL" id="EU163408">
    <property type="protein sequence ID" value="ABW06761.1"/>
    <property type="molecule type" value="mRNA"/>
</dbReference>
<dbReference type="EMBL" id="AK021361">
    <property type="protein sequence ID" value="BAB32387.1"/>
    <property type="status" value="ALT_SEQ"/>
    <property type="molecule type" value="mRNA"/>
</dbReference>
<dbReference type="EMBL" id="AK168005">
    <property type="protein sequence ID" value="BAE39993.1"/>
    <property type="molecule type" value="mRNA"/>
</dbReference>
<dbReference type="EMBL" id="AK146930">
    <property type="protein sequence ID" value="BAE27541.1"/>
    <property type="molecule type" value="mRNA"/>
</dbReference>
<dbReference type="EMBL" id="AC093360">
    <property type="status" value="NOT_ANNOTATED_CDS"/>
    <property type="molecule type" value="Genomic_DNA"/>
</dbReference>
<dbReference type="EMBL" id="AC114675">
    <property type="status" value="NOT_ANNOTATED_CDS"/>
    <property type="molecule type" value="Genomic_DNA"/>
</dbReference>
<dbReference type="EMBL" id="AC121306">
    <property type="status" value="NOT_ANNOTATED_CDS"/>
    <property type="molecule type" value="Genomic_DNA"/>
</dbReference>
<dbReference type="EMBL" id="AC122913">
    <property type="status" value="NOT_ANNOTATED_CDS"/>
    <property type="molecule type" value="Genomic_DNA"/>
</dbReference>
<dbReference type="EMBL" id="AC164401">
    <property type="status" value="NOT_ANNOTATED_CDS"/>
    <property type="molecule type" value="Genomic_DNA"/>
</dbReference>
<dbReference type="EMBL" id="BC060529">
    <property type="protein sequence ID" value="AAH60529.1"/>
    <property type="molecule type" value="mRNA"/>
</dbReference>
<dbReference type="EMBL" id="BC094348">
    <property type="protein sequence ID" value="AAH94348.1"/>
    <property type="status" value="ALT_SEQ"/>
    <property type="molecule type" value="mRNA"/>
</dbReference>
<dbReference type="EMBL" id="AF145716">
    <property type="protein sequence ID" value="AAF34244.1"/>
    <property type="molecule type" value="mRNA"/>
</dbReference>
<dbReference type="CCDS" id="CCDS50926.1"/>
<dbReference type="CCDS" id="CCDS50927.1">
    <molecule id="P0DPB4-4"/>
</dbReference>
<dbReference type="CCDS" id="CCDS50929.1">
    <molecule id="P0DPB4-3"/>
</dbReference>
<dbReference type="CCDS" id="CCDS71249.1">
    <molecule id="P0DPB4-2"/>
</dbReference>
<dbReference type="RefSeq" id="NP_001106891.1">
    <molecule id="P0DPB4-4"/>
    <property type="nucleotide sequence ID" value="NM_001113420.1"/>
</dbReference>
<dbReference type="RefSeq" id="NP_001106892.1">
    <molecule id="P0DPB4-1"/>
    <property type="nucleotide sequence ID" value="NM_001113421.1"/>
</dbReference>
<dbReference type="RefSeq" id="NP_001268973.1">
    <molecule id="P0DPB4-2"/>
    <property type="nucleotide sequence ID" value="NM_001282044.1"/>
</dbReference>
<dbReference type="RefSeq" id="NP_001268974.1">
    <molecule id="P0DPB4-2"/>
    <property type="nucleotide sequence ID" value="NM_001282045.1"/>
</dbReference>
<dbReference type="RefSeq" id="NP_038956.2">
    <molecule id="P0DPB4-3"/>
    <property type="nucleotide sequence ID" value="NM_013928.5"/>
</dbReference>
<dbReference type="SMR" id="P0DPB4"/>
<dbReference type="FunCoup" id="P0DPB4">
    <property type="interactions" value="433"/>
</dbReference>
<dbReference type="IntAct" id="P0DPB4">
    <property type="interactions" value="1"/>
</dbReference>
<dbReference type="STRING" id="10090.ENSMUSP00000029346"/>
<dbReference type="iPTMnet" id="P0DPB4"/>
<dbReference type="PhosphoSitePlus" id="P0DPB4"/>
<dbReference type="PaxDb" id="10090-ENSMUSP00000029346"/>
<dbReference type="ProteomicsDB" id="253406"/>
<dbReference type="ProteomicsDB" id="253407">
    <molecule id="P0DPB4-2"/>
</dbReference>
<dbReference type="ProteomicsDB" id="253408">
    <molecule id="P0DPB4-3"/>
</dbReference>
<dbReference type="ProteomicsDB" id="253409">
    <molecule id="P0DPB4-4"/>
</dbReference>
<dbReference type="DNASU" id="30953"/>
<dbReference type="Ensembl" id="ENSMUST00000029346.13">
    <molecule id="P0DPB4-1"/>
    <property type="protein sequence ID" value="ENSMUSP00000029346.6"/>
    <property type="gene ID" value="ENSMUSG00000027777.16"/>
</dbReference>
<dbReference type="Ensembl" id="ENSMUST00000169909.10">
    <molecule id="P0DPB4-4"/>
    <property type="protein sequence ID" value="ENSMUSP00000129152.3"/>
    <property type="gene ID" value="ENSMUSG00000027777.16"/>
</dbReference>
<dbReference type="Ensembl" id="ENSMUST00000170788.9">
    <molecule id="P0DPB4-3"/>
    <property type="protein sequence ID" value="ENSMUSP00000126443.2"/>
    <property type="gene ID" value="ENSMUSG00000027777.16"/>
</dbReference>
<dbReference type="Ensembl" id="ENSMUST00000182532.8">
    <molecule id="P0DPB4-2"/>
    <property type="protein sequence ID" value="ENSMUSP00000138245.2"/>
    <property type="gene ID" value="ENSMUSG00000027777.16"/>
</dbReference>
<dbReference type="Ensembl" id="ENSMUST00000182719.8">
    <molecule id="P0DPB4-2"/>
    <property type="protein sequence ID" value="ENSMUSP00000138207.2"/>
    <property type="gene ID" value="ENSMUSG00000027777.16"/>
</dbReference>
<dbReference type="GeneID" id="30953"/>
<dbReference type="KEGG" id="mmu:30953"/>
<dbReference type="AGR" id="MGI:1353557"/>
<dbReference type="CTD" id="29970"/>
<dbReference type="MGI" id="MGI:1353557">
    <property type="gene designation" value="Schip1"/>
</dbReference>
<dbReference type="VEuPathDB" id="HostDB:ENSMUSG00000027777"/>
<dbReference type="eggNOG" id="KOG4847">
    <property type="taxonomic scope" value="Eukaryota"/>
</dbReference>
<dbReference type="GeneTree" id="ENSGT00390000011127"/>
<dbReference type="InParanoid" id="P0DPB4"/>
<dbReference type="OrthoDB" id="6260144at2759"/>
<dbReference type="PRO" id="PR:P0DPB4"/>
<dbReference type="Proteomes" id="UP000000589">
    <property type="component" value="Chromosome 3"/>
</dbReference>
<dbReference type="RNAct" id="P0DPB4">
    <property type="molecule type" value="protein"/>
</dbReference>
<dbReference type="Bgee" id="ENSMUSG00000027777">
    <property type="expression patterns" value="Expressed in dentate gyrus of hippocampal formation granule cell and 161 other cell types or tissues"/>
</dbReference>
<dbReference type="ExpressionAtlas" id="P0DPB4">
    <property type="expression patterns" value="baseline and differential"/>
</dbReference>
<dbReference type="GO" id="GO:0005737">
    <property type="term" value="C:cytoplasm"/>
    <property type="evidence" value="ECO:0000266"/>
    <property type="project" value="MGI"/>
</dbReference>
<dbReference type="GO" id="GO:0042803">
    <property type="term" value="F:protein homodimerization activity"/>
    <property type="evidence" value="ECO:0000266"/>
    <property type="project" value="MGI"/>
</dbReference>
<dbReference type="GO" id="GO:0008210">
    <property type="term" value="P:estrogen metabolic process"/>
    <property type="evidence" value="ECO:0000316"/>
    <property type="project" value="MGI"/>
</dbReference>
<dbReference type="GO" id="GO:0060325">
    <property type="term" value="P:face morphogenesis"/>
    <property type="evidence" value="ECO:0000315"/>
    <property type="project" value="MGI"/>
</dbReference>
<dbReference type="GO" id="GO:0008585">
    <property type="term" value="P:female gonad development"/>
    <property type="evidence" value="ECO:0000316"/>
    <property type="project" value="MGI"/>
</dbReference>
<dbReference type="GO" id="GO:0010761">
    <property type="term" value="P:fibroblast migration"/>
    <property type="evidence" value="ECO:0000315"/>
    <property type="project" value="MGI"/>
</dbReference>
<dbReference type="GO" id="GO:0001822">
    <property type="term" value="P:kidney development"/>
    <property type="evidence" value="ECO:0000315"/>
    <property type="project" value="MGI"/>
</dbReference>
<dbReference type="GO" id="GO:0001553">
    <property type="term" value="P:luteinization"/>
    <property type="evidence" value="ECO:0000316"/>
    <property type="project" value="MGI"/>
</dbReference>
<dbReference type="GO" id="GO:0048008">
    <property type="term" value="P:platelet-derived growth factor receptor signaling pathway"/>
    <property type="evidence" value="ECO:0000315"/>
    <property type="project" value="MGI"/>
</dbReference>
<dbReference type="GO" id="GO:0009791">
    <property type="term" value="P:post-embryonic development"/>
    <property type="evidence" value="ECO:0000315"/>
    <property type="project" value="MGI"/>
</dbReference>
<dbReference type="GO" id="GO:0060021">
    <property type="term" value="P:roof of mouth development"/>
    <property type="evidence" value="ECO:0000315"/>
    <property type="project" value="MGI"/>
</dbReference>
<dbReference type="GO" id="GO:0048705">
    <property type="term" value="P:skeletal system morphogenesis"/>
    <property type="evidence" value="ECO:0000315"/>
    <property type="project" value="MGI"/>
</dbReference>
<dbReference type="GO" id="GO:0048745">
    <property type="term" value="P:smooth muscle tissue development"/>
    <property type="evidence" value="ECO:0000315"/>
    <property type="project" value="MGI"/>
</dbReference>
<dbReference type="InterPro" id="IPR039045">
    <property type="entry name" value="SCHIP_1"/>
</dbReference>
<dbReference type="InterPro" id="IPR015649">
    <property type="entry name" value="SCHIP_1_C"/>
</dbReference>
<dbReference type="PANTHER" id="PTHR13103:SF2">
    <property type="entry name" value="IQCJ-SCHIP1 READTHROUGH TRANSCRIPT PROTEIN-RELATED"/>
    <property type="match status" value="1"/>
</dbReference>
<dbReference type="PANTHER" id="PTHR13103">
    <property type="entry name" value="SCHWANNOMIN INTERACTING PROTEIN 1"/>
    <property type="match status" value="1"/>
</dbReference>
<dbReference type="Pfam" id="PF10148">
    <property type="entry name" value="SCHIP-1_C"/>
    <property type="match status" value="1"/>
</dbReference>
<organism>
    <name type="scientific">Mus musculus</name>
    <name type="common">Mouse</name>
    <dbReference type="NCBI Taxonomy" id="10090"/>
    <lineage>
        <taxon>Eukaryota</taxon>
        <taxon>Metazoa</taxon>
        <taxon>Chordata</taxon>
        <taxon>Craniata</taxon>
        <taxon>Vertebrata</taxon>
        <taxon>Euteleostomi</taxon>
        <taxon>Mammalia</taxon>
        <taxon>Eutheria</taxon>
        <taxon>Euarchontoglires</taxon>
        <taxon>Glires</taxon>
        <taxon>Rodentia</taxon>
        <taxon>Myomorpha</taxon>
        <taxon>Muroidea</taxon>
        <taxon>Muridae</taxon>
        <taxon>Murinae</taxon>
        <taxon>Mus</taxon>
        <taxon>Mus</taxon>
    </lineage>
</organism>
<reference key="1">
    <citation type="journal article" date="2008" name="J. Neurosci.">
        <title>Schwannomin-interacting protein-1 isoform IQCJ-SCHIP-1 is a late component of nodes of Ranvier and axon initial segments.</title>
        <authorList>
            <person name="Martin P.M."/>
            <person name="Carnaud M."/>
            <person name="Garcia del Cano G."/>
            <person name="Irondelle M."/>
            <person name="Irinopoulou T."/>
            <person name="Girault J.A."/>
            <person name="Dargent B."/>
            <person name="Goutebroze L."/>
        </authorList>
    </citation>
    <scope>NUCLEOTIDE SEQUENCE [MRNA] (ISOFORMS SCHIP1-1 AND SCHIP1-4)</scope>
    <scope>ALTERNATIVE SPLICING</scope>
    <source>
        <strain>FVB/NJ</strain>
    </source>
</reference>
<reference key="2">
    <citation type="journal article" date="2005" name="Science">
        <title>The transcriptional landscape of the mammalian genome.</title>
        <authorList>
            <person name="Carninci P."/>
            <person name="Kasukawa T."/>
            <person name="Katayama S."/>
            <person name="Gough J."/>
            <person name="Frith M.C."/>
            <person name="Maeda N."/>
            <person name="Oyama R."/>
            <person name="Ravasi T."/>
            <person name="Lenhard B."/>
            <person name="Wells C."/>
            <person name="Kodzius R."/>
            <person name="Shimokawa K."/>
            <person name="Bajic V.B."/>
            <person name="Brenner S.E."/>
            <person name="Batalov S."/>
            <person name="Forrest A.R."/>
            <person name="Zavolan M."/>
            <person name="Davis M.J."/>
            <person name="Wilming L.G."/>
            <person name="Aidinis V."/>
            <person name="Allen J.E."/>
            <person name="Ambesi-Impiombato A."/>
            <person name="Apweiler R."/>
            <person name="Aturaliya R.N."/>
            <person name="Bailey T.L."/>
            <person name="Bansal M."/>
            <person name="Baxter L."/>
            <person name="Beisel K.W."/>
            <person name="Bersano T."/>
            <person name="Bono H."/>
            <person name="Chalk A.M."/>
            <person name="Chiu K.P."/>
            <person name="Choudhary V."/>
            <person name="Christoffels A."/>
            <person name="Clutterbuck D.R."/>
            <person name="Crowe M.L."/>
            <person name="Dalla E."/>
            <person name="Dalrymple B.P."/>
            <person name="de Bono B."/>
            <person name="Della Gatta G."/>
            <person name="di Bernardo D."/>
            <person name="Down T."/>
            <person name="Engstrom P."/>
            <person name="Fagiolini M."/>
            <person name="Faulkner G."/>
            <person name="Fletcher C.F."/>
            <person name="Fukushima T."/>
            <person name="Furuno M."/>
            <person name="Futaki S."/>
            <person name="Gariboldi M."/>
            <person name="Georgii-Hemming P."/>
            <person name="Gingeras T.R."/>
            <person name="Gojobori T."/>
            <person name="Green R.E."/>
            <person name="Gustincich S."/>
            <person name="Harbers M."/>
            <person name="Hayashi Y."/>
            <person name="Hensch T.K."/>
            <person name="Hirokawa N."/>
            <person name="Hill D."/>
            <person name="Huminiecki L."/>
            <person name="Iacono M."/>
            <person name="Ikeo K."/>
            <person name="Iwama A."/>
            <person name="Ishikawa T."/>
            <person name="Jakt M."/>
            <person name="Kanapin A."/>
            <person name="Katoh M."/>
            <person name="Kawasawa Y."/>
            <person name="Kelso J."/>
            <person name="Kitamura H."/>
            <person name="Kitano H."/>
            <person name="Kollias G."/>
            <person name="Krishnan S.P."/>
            <person name="Kruger A."/>
            <person name="Kummerfeld S.K."/>
            <person name="Kurochkin I.V."/>
            <person name="Lareau L.F."/>
            <person name="Lazarevic D."/>
            <person name="Lipovich L."/>
            <person name="Liu J."/>
            <person name="Liuni S."/>
            <person name="McWilliam S."/>
            <person name="Madan Babu M."/>
            <person name="Madera M."/>
            <person name="Marchionni L."/>
            <person name="Matsuda H."/>
            <person name="Matsuzawa S."/>
            <person name="Miki H."/>
            <person name="Mignone F."/>
            <person name="Miyake S."/>
            <person name="Morris K."/>
            <person name="Mottagui-Tabar S."/>
            <person name="Mulder N."/>
            <person name="Nakano N."/>
            <person name="Nakauchi H."/>
            <person name="Ng P."/>
            <person name="Nilsson R."/>
            <person name="Nishiguchi S."/>
            <person name="Nishikawa S."/>
            <person name="Nori F."/>
            <person name="Ohara O."/>
            <person name="Okazaki Y."/>
            <person name="Orlando V."/>
            <person name="Pang K.C."/>
            <person name="Pavan W.J."/>
            <person name="Pavesi G."/>
            <person name="Pesole G."/>
            <person name="Petrovsky N."/>
            <person name="Piazza S."/>
            <person name="Reed J."/>
            <person name="Reid J.F."/>
            <person name="Ring B.Z."/>
            <person name="Ringwald M."/>
            <person name="Rost B."/>
            <person name="Ruan Y."/>
            <person name="Salzberg S.L."/>
            <person name="Sandelin A."/>
            <person name="Schneider C."/>
            <person name="Schoenbach C."/>
            <person name="Sekiguchi K."/>
            <person name="Semple C.A."/>
            <person name="Seno S."/>
            <person name="Sessa L."/>
            <person name="Sheng Y."/>
            <person name="Shibata Y."/>
            <person name="Shimada H."/>
            <person name="Shimada K."/>
            <person name="Silva D."/>
            <person name="Sinclair B."/>
            <person name="Sperling S."/>
            <person name="Stupka E."/>
            <person name="Sugiura K."/>
            <person name="Sultana R."/>
            <person name="Takenaka Y."/>
            <person name="Taki K."/>
            <person name="Tammoja K."/>
            <person name="Tan S.L."/>
            <person name="Tang S."/>
            <person name="Taylor M.S."/>
            <person name="Tegner J."/>
            <person name="Teichmann S.A."/>
            <person name="Ueda H.R."/>
            <person name="van Nimwegen E."/>
            <person name="Verardo R."/>
            <person name="Wei C.L."/>
            <person name="Yagi K."/>
            <person name="Yamanishi H."/>
            <person name="Zabarovsky E."/>
            <person name="Zhu S."/>
            <person name="Zimmer A."/>
            <person name="Hide W."/>
            <person name="Bult C."/>
            <person name="Grimmond S.M."/>
            <person name="Teasdale R.D."/>
            <person name="Liu E.T."/>
            <person name="Brusic V."/>
            <person name="Quackenbush J."/>
            <person name="Wahlestedt C."/>
            <person name="Mattick J.S."/>
            <person name="Hume D.A."/>
            <person name="Kai C."/>
            <person name="Sasaki D."/>
            <person name="Tomaru Y."/>
            <person name="Fukuda S."/>
            <person name="Kanamori-Katayama M."/>
            <person name="Suzuki M."/>
            <person name="Aoki J."/>
            <person name="Arakawa T."/>
            <person name="Iida J."/>
            <person name="Imamura K."/>
            <person name="Itoh M."/>
            <person name="Kato T."/>
            <person name="Kawaji H."/>
            <person name="Kawagashira N."/>
            <person name="Kawashima T."/>
            <person name="Kojima M."/>
            <person name="Kondo S."/>
            <person name="Konno H."/>
            <person name="Nakano K."/>
            <person name="Ninomiya N."/>
            <person name="Nishio T."/>
            <person name="Okada M."/>
            <person name="Plessy C."/>
            <person name="Shibata K."/>
            <person name="Shiraki T."/>
            <person name="Suzuki S."/>
            <person name="Tagami M."/>
            <person name="Waki K."/>
            <person name="Watahiki A."/>
            <person name="Okamura-Oho Y."/>
            <person name="Suzuki H."/>
            <person name="Kawai J."/>
            <person name="Hayashizaki Y."/>
        </authorList>
    </citation>
    <scope>NUCLEOTIDE SEQUENCE [LARGE SCALE MRNA] (ISOFORMS SCHIP1-2 AND SCHIP1-3)</scope>
    <source>
        <strain>BALB/cJ</strain>
        <strain>C57BL/6J</strain>
        <tissue>Head</tissue>
        <tissue>Stomach</tissue>
    </source>
</reference>
<reference key="3">
    <citation type="journal article" date="2009" name="PLoS Biol.">
        <title>Lineage-specific biology revealed by a finished genome assembly of the mouse.</title>
        <authorList>
            <person name="Church D.M."/>
            <person name="Goodstadt L."/>
            <person name="Hillier L.W."/>
            <person name="Zody M.C."/>
            <person name="Goldstein S."/>
            <person name="She X."/>
            <person name="Bult C.J."/>
            <person name="Agarwala R."/>
            <person name="Cherry J.L."/>
            <person name="DiCuccio M."/>
            <person name="Hlavina W."/>
            <person name="Kapustin Y."/>
            <person name="Meric P."/>
            <person name="Maglott D."/>
            <person name="Birtle Z."/>
            <person name="Marques A.C."/>
            <person name="Graves T."/>
            <person name="Zhou S."/>
            <person name="Teague B."/>
            <person name="Potamousis K."/>
            <person name="Churas C."/>
            <person name="Place M."/>
            <person name="Herschleb J."/>
            <person name="Runnheim R."/>
            <person name="Forrest D."/>
            <person name="Amos-Landgraf J."/>
            <person name="Schwartz D.C."/>
            <person name="Cheng Z."/>
            <person name="Lindblad-Toh K."/>
            <person name="Eichler E.E."/>
            <person name="Ponting C.P."/>
        </authorList>
    </citation>
    <scope>NUCLEOTIDE SEQUENCE [LARGE SCALE GENOMIC DNA]</scope>
    <source>
        <strain>C57BL/6J</strain>
    </source>
</reference>
<reference key="4">
    <citation type="journal article" date="2004" name="Genome Res.">
        <title>The status, quality, and expansion of the NIH full-length cDNA project: the Mammalian Gene Collection (MGC).</title>
        <authorList>
            <consortium name="The MGC Project Team"/>
        </authorList>
    </citation>
    <scope>NUCLEOTIDE SEQUENCE [LARGE SCALE MRNA] (ISOFORMS SCHIP1-2 AND SCHIP1-3)</scope>
    <source>
        <strain>C57BL/6J</strain>
        <tissue>Brain</tissue>
    </source>
</reference>
<reference key="5">
    <citation type="journal article" date="2000" name="Mol. Cell. Biol.">
        <title>Cloning and characterization of SCHIP-1, a novel protein interacting specifically with spliced isoforms and naturally occurring mutant NF2 proteins.</title>
        <authorList>
            <person name="Goutebroze L."/>
            <person name="Brault E."/>
            <person name="Muchardt C."/>
            <person name="Camonis J."/>
            <person name="Thomas G."/>
        </authorList>
    </citation>
    <scope>NUCLEOTIDE SEQUENCE [MRNA] OF 117-484 (ISOFORMS SCHIP1-1/SCHIP1-2)</scope>
    <source>
        <tissue>Brain</tissue>
    </source>
</reference>
<reference key="6">
    <citation type="journal article" date="2015" name="Development">
        <title>The cytoskeleton-associated protein SCHIP1 is involved in axon guidance, and is required for piriform cortex and anterior commissure development.</title>
        <authorList>
            <person name="Klingler E."/>
            <person name="Martin P.M."/>
            <person name="Garcia M."/>
            <person name="Moreau-Fauvarque C."/>
            <person name="Falk J."/>
            <person name="Chareyre F."/>
            <person name="Giovannini M."/>
            <person name="Chedotal A."/>
            <person name="Girault J.A."/>
            <person name="Goutebroze L."/>
        </authorList>
    </citation>
    <scope>DISRUPTION PHENOTYPE</scope>
</reference>
<reference key="7">
    <citation type="journal article" date="2017" name="J. Biol. Chem.">
        <title>Schwannomin-interacting protein 1 isoform IQCJ-SCHIP1 is a multipartner ankyrin- and spectrin-binding protein involved in the organization of nodes of Ranvier.</title>
        <authorList>
            <person name="Martin P.M."/>
            <person name="Cifuentes-Diaz C."/>
            <person name="Devaux J."/>
            <person name="Garcia M."/>
            <person name="Bureau J."/>
            <person name="Thomasseau S."/>
            <person name="Klingler E."/>
            <person name="Girault J.A."/>
            <person name="Goutebroze L."/>
        </authorList>
    </citation>
    <scope>DISRUPTION PHENOTYPE</scope>
</reference>
<evidence type="ECO:0000250" key="1">
    <source>
        <dbReference type="UniProtKB" id="P0DPB3"/>
    </source>
</evidence>
<evidence type="ECO:0000255" key="2"/>
<evidence type="ECO:0000256" key="3">
    <source>
        <dbReference type="SAM" id="MobiDB-lite"/>
    </source>
</evidence>
<evidence type="ECO:0000269" key="4">
    <source>
    </source>
</evidence>
<evidence type="ECO:0000269" key="5">
    <source>
    </source>
</evidence>
<evidence type="ECO:0000303" key="6">
    <source>
    </source>
</evidence>
<evidence type="ECO:0000303" key="7">
    <source>
    </source>
</evidence>
<evidence type="ECO:0000303" key="8">
    <source>
    </source>
</evidence>
<evidence type="ECO:0000305" key="9"/>
<evidence type="ECO:0000312" key="10">
    <source>
        <dbReference type="MGI" id="MGI:1353557"/>
    </source>
</evidence>
<feature type="chain" id="PRO_0000288928" description="Schwannomin-interacting protein 1">
    <location>
        <begin position="1"/>
        <end position="484"/>
    </location>
</feature>
<feature type="region of interest" description="Disordered" evidence="3">
    <location>
        <begin position="1"/>
        <end position="74"/>
    </location>
</feature>
<feature type="region of interest" description="Disordered" evidence="3">
    <location>
        <begin position="86"/>
        <end position="220"/>
    </location>
</feature>
<feature type="region of interest" description="Disordered" evidence="3">
    <location>
        <begin position="232"/>
        <end position="258"/>
    </location>
</feature>
<feature type="region of interest" description="Disordered" evidence="3">
    <location>
        <begin position="305"/>
        <end position="350"/>
    </location>
</feature>
<feature type="coiled-coil region" evidence="2">
    <location>
        <begin position="421"/>
        <end position="455"/>
    </location>
</feature>
<feature type="compositionally biased region" description="Basic and acidic residues" evidence="3">
    <location>
        <begin position="1"/>
        <end position="28"/>
    </location>
</feature>
<feature type="compositionally biased region" description="Low complexity" evidence="3">
    <location>
        <begin position="33"/>
        <end position="67"/>
    </location>
</feature>
<feature type="compositionally biased region" description="Acidic residues" evidence="3">
    <location>
        <begin position="92"/>
        <end position="106"/>
    </location>
</feature>
<feature type="compositionally biased region" description="Basic and acidic residues" evidence="3">
    <location>
        <begin position="107"/>
        <end position="120"/>
    </location>
</feature>
<feature type="compositionally biased region" description="Low complexity" evidence="3">
    <location>
        <begin position="123"/>
        <end position="137"/>
    </location>
</feature>
<feature type="compositionally biased region" description="Basic and acidic residues" evidence="3">
    <location>
        <begin position="150"/>
        <end position="159"/>
    </location>
</feature>
<feature type="compositionally biased region" description="Polar residues" evidence="3">
    <location>
        <begin position="239"/>
        <end position="252"/>
    </location>
</feature>
<feature type="compositionally biased region" description="Basic and acidic residues" evidence="3">
    <location>
        <begin position="306"/>
        <end position="320"/>
    </location>
</feature>
<feature type="compositionally biased region" description="Polar residues" evidence="3">
    <location>
        <begin position="321"/>
        <end position="332"/>
    </location>
</feature>
<feature type="compositionally biased region" description="Acidic residues" evidence="3">
    <location>
        <begin position="341"/>
        <end position="350"/>
    </location>
</feature>
<feature type="splice variant" id="VSP_025831" description="In isoform Schip1-3." evidence="6 7">
    <location>
        <begin position="1"/>
        <end position="240"/>
    </location>
</feature>
<feature type="splice variant" id="VSP_046119" description="In isoform Schip1-2." evidence="6 7">
    <location>
        <begin position="1"/>
        <end position="28"/>
    </location>
</feature>
<feature type="splice variant" id="VSP_046121" description="In isoform Schip1-4." evidence="8">
    <location>
        <begin position="23"/>
        <end position="250"/>
    </location>
</feature>
<feature type="splice variant" id="VSP_025834" description="In isoform Schip1-3." evidence="6 7">
    <original>QGQARTNSTS</original>
    <variation>MVHQENCSYQ</variation>
    <location>
        <begin position="241"/>
        <end position="250"/>
    </location>
</feature>
<feature type="sequence conflict" description="In Ref. 5; AAF34244." evidence="9" ref="5">
    <original>A</original>
    <variation>V</variation>
    <location>
        <position position="166"/>
    </location>
</feature>
<feature type="sequence conflict" description="In Ref. 2; BAB32387." evidence="9" ref="2">
    <original>K</original>
    <variation>R</variation>
    <location>
        <position position="384"/>
    </location>
</feature>
<sequence>MERSEQRVRAAWDCDPGKQADRDYREDGMDLGSDAGSSSSSRASSQSNSTKVTPCSECKSSSSPGGSLDLVSALEDYEEPFPVYQKKVIDEWAPEEDGEEEEEEDDRGYRDDGCPAREPGDVSARIGSSGSGSRSAATTMPSPMPNGNLHPHDPQDLRHNGNVVVAGRPNASRVPRRPIQKTQPPGSRRGGRNRASGGLCLQPPDGGTRVPEEPPAPPMDWEALEKHLAGLQFREQEVRNQGQARTNSTSAQKNERESIRQKLALGSFFDDGPGIYTSCSKSGKPSLSARLQSGMNLQICFVNDSGSDKDSDADDSKTETSLDTPLSPMSKQSSSYSDRDTTEEESESLDDMDFLTRQKKLQAEAKMALAMAKPMAKMQVEVEKQNRKKSPVADLLPHMPHISECLMKRSLKPTDLRDMTIGQLQVIVNDLHSQIESLNEELVQLLLIRDELHTEQDAMLVDIEDLTRHAESQQKHMAEKMPAK</sequence>